<organism>
    <name type="scientific">Neosartorya fischeri (strain ATCC 1020 / DSM 3700 / CBS 544.65 / FGSC A1164 / JCM 1740 / NRRL 181 / WB 181)</name>
    <name type="common">Aspergillus fischerianus</name>
    <dbReference type="NCBI Taxonomy" id="331117"/>
    <lineage>
        <taxon>Eukaryota</taxon>
        <taxon>Fungi</taxon>
        <taxon>Dikarya</taxon>
        <taxon>Ascomycota</taxon>
        <taxon>Pezizomycotina</taxon>
        <taxon>Eurotiomycetes</taxon>
        <taxon>Eurotiomycetidae</taxon>
        <taxon>Eurotiales</taxon>
        <taxon>Aspergillaceae</taxon>
        <taxon>Aspergillus</taxon>
        <taxon>Aspergillus subgen. Fumigati</taxon>
    </lineage>
</organism>
<accession>A1DAX2</accession>
<reference key="1">
    <citation type="journal article" date="2008" name="PLoS Genet.">
        <title>Genomic islands in the pathogenic filamentous fungus Aspergillus fumigatus.</title>
        <authorList>
            <person name="Fedorova N.D."/>
            <person name="Khaldi N."/>
            <person name="Joardar V.S."/>
            <person name="Maiti R."/>
            <person name="Amedeo P."/>
            <person name="Anderson M.J."/>
            <person name="Crabtree J."/>
            <person name="Silva J.C."/>
            <person name="Badger J.H."/>
            <person name="Albarraq A."/>
            <person name="Angiuoli S."/>
            <person name="Bussey H."/>
            <person name="Bowyer P."/>
            <person name="Cotty P.J."/>
            <person name="Dyer P.S."/>
            <person name="Egan A."/>
            <person name="Galens K."/>
            <person name="Fraser-Liggett C.M."/>
            <person name="Haas B.J."/>
            <person name="Inman J.M."/>
            <person name="Kent R."/>
            <person name="Lemieux S."/>
            <person name="Malavazi I."/>
            <person name="Orvis J."/>
            <person name="Roemer T."/>
            <person name="Ronning C.M."/>
            <person name="Sundaram J.P."/>
            <person name="Sutton G."/>
            <person name="Turner G."/>
            <person name="Venter J.C."/>
            <person name="White O.R."/>
            <person name="Whitty B.R."/>
            <person name="Youngman P."/>
            <person name="Wolfe K.H."/>
            <person name="Goldman G.H."/>
            <person name="Wortman J.R."/>
            <person name="Jiang B."/>
            <person name="Denning D.W."/>
            <person name="Nierman W.C."/>
        </authorList>
    </citation>
    <scope>NUCLEOTIDE SEQUENCE [LARGE SCALE GENOMIC DNA]</scope>
    <source>
        <strain>ATCC 1020 / DSM 3700 / CBS 544.65 / FGSC A1164 / JCM 1740 / NRRL 181 / WB 181</strain>
    </source>
</reference>
<dbReference type="EC" id="3.2.1.67"/>
<dbReference type="EMBL" id="DS027694">
    <property type="protein sequence ID" value="EAW20012.1"/>
    <property type="molecule type" value="Genomic_DNA"/>
</dbReference>
<dbReference type="RefSeq" id="XP_001261909.1">
    <property type="nucleotide sequence ID" value="XM_001261908.1"/>
</dbReference>
<dbReference type="SMR" id="A1DAX2"/>
<dbReference type="STRING" id="331117.A1DAX2"/>
<dbReference type="GlyCosmos" id="A1DAX2">
    <property type="glycosylation" value="9 sites, No reported glycans"/>
</dbReference>
<dbReference type="EnsemblFungi" id="EAW20012">
    <property type="protein sequence ID" value="EAW20012"/>
    <property type="gene ID" value="NFIA_096340"/>
</dbReference>
<dbReference type="GeneID" id="4588479"/>
<dbReference type="KEGG" id="nfi:NFIA_096340"/>
<dbReference type="VEuPathDB" id="FungiDB:NFIA_096340"/>
<dbReference type="eggNOG" id="ENOG502QPPR">
    <property type="taxonomic scope" value="Eukaryota"/>
</dbReference>
<dbReference type="HOGENOM" id="CLU_016031_1_0_1"/>
<dbReference type="OMA" id="GYTSGKY"/>
<dbReference type="OrthoDB" id="187139at2759"/>
<dbReference type="Proteomes" id="UP000006702">
    <property type="component" value="Unassembled WGS sequence"/>
</dbReference>
<dbReference type="GO" id="GO:0005576">
    <property type="term" value="C:extracellular region"/>
    <property type="evidence" value="ECO:0000250"/>
    <property type="project" value="UniProtKB"/>
</dbReference>
<dbReference type="GO" id="GO:0047911">
    <property type="term" value="F:galacturan 1,4-alpha-galacturonidase activity"/>
    <property type="evidence" value="ECO:0007669"/>
    <property type="project" value="UniProtKB-EC"/>
</dbReference>
<dbReference type="GO" id="GO:0004650">
    <property type="term" value="F:polygalacturonase activity"/>
    <property type="evidence" value="ECO:0000250"/>
    <property type="project" value="UniProtKB"/>
</dbReference>
<dbReference type="GO" id="GO:0071555">
    <property type="term" value="P:cell wall organization"/>
    <property type="evidence" value="ECO:0007669"/>
    <property type="project" value="UniProtKB-KW"/>
</dbReference>
<dbReference type="GO" id="GO:0045490">
    <property type="term" value="P:pectin catabolic process"/>
    <property type="evidence" value="ECO:0000250"/>
    <property type="project" value="UniProtKB"/>
</dbReference>
<dbReference type="FunFam" id="2.160.20.10:FF:000040">
    <property type="entry name" value="Probable exopolygalacturonase B"/>
    <property type="match status" value="1"/>
</dbReference>
<dbReference type="Gene3D" id="2.160.20.10">
    <property type="entry name" value="Single-stranded right-handed beta-helix, Pectin lyase-like"/>
    <property type="match status" value="1"/>
</dbReference>
<dbReference type="InterPro" id="IPR000743">
    <property type="entry name" value="Glyco_hydro_28"/>
</dbReference>
<dbReference type="InterPro" id="IPR012334">
    <property type="entry name" value="Pectin_lyas_fold"/>
</dbReference>
<dbReference type="InterPro" id="IPR011050">
    <property type="entry name" value="Pectin_lyase_fold/virulence"/>
</dbReference>
<dbReference type="PANTHER" id="PTHR31736">
    <property type="match status" value="1"/>
</dbReference>
<dbReference type="PANTHER" id="PTHR31736:SF6">
    <property type="entry name" value="EXOPOLYGALACTURONASE B-RELATED"/>
    <property type="match status" value="1"/>
</dbReference>
<dbReference type="Pfam" id="PF00295">
    <property type="entry name" value="Glyco_hydro_28"/>
    <property type="match status" value="1"/>
</dbReference>
<dbReference type="SUPFAM" id="SSF51126">
    <property type="entry name" value="Pectin lyase-like"/>
    <property type="match status" value="1"/>
</dbReference>
<name>PGXB_NEOFI</name>
<gene>
    <name type="primary">pgxB</name>
    <name type="ORF">NFIA_096340</name>
</gene>
<protein>
    <recommendedName>
        <fullName>Probable exopolygalacturonase B</fullName>
        <ecNumber>3.2.1.67</ecNumber>
    </recommendedName>
    <alternativeName>
        <fullName>Galacturan 1,4-alpha-galacturonidase B</fullName>
    </alternativeName>
    <alternativeName>
        <fullName>Poly(1,4-alpha-D-galacturonide)galacturonohydrolase B</fullName>
    </alternativeName>
</protein>
<feature type="signal peptide" evidence="2">
    <location>
        <begin position="1"/>
        <end position="16"/>
    </location>
</feature>
<feature type="chain" id="PRO_0000393682" description="Probable exopolygalacturonase B">
    <location>
        <begin position="17"/>
        <end position="453"/>
    </location>
</feature>
<feature type="repeat" description="PbH1 1">
    <location>
        <begin position="295"/>
        <end position="316"/>
    </location>
</feature>
<feature type="repeat" description="PbH1 2">
    <location>
        <begin position="327"/>
        <end position="348"/>
    </location>
</feature>
<feature type="repeat" description="PbH1 3">
    <location>
        <begin position="362"/>
        <end position="405"/>
    </location>
</feature>
<feature type="active site" description="Proton donor" evidence="1">
    <location>
        <position position="255"/>
    </location>
</feature>
<feature type="active site" evidence="1">
    <location>
        <position position="278"/>
    </location>
</feature>
<feature type="glycosylation site" description="N-linked (GlcNAc...) asparagine" evidence="2">
    <location>
        <position position="185"/>
    </location>
</feature>
<feature type="glycosylation site" description="N-linked (GlcNAc...) asparagine" evidence="2">
    <location>
        <position position="225"/>
    </location>
</feature>
<feature type="glycosylation site" description="N-linked (GlcNAc...) asparagine" evidence="2">
    <location>
        <position position="263"/>
    </location>
</feature>
<feature type="glycosylation site" description="N-linked (GlcNAc...) asparagine" evidence="2">
    <location>
        <position position="275"/>
    </location>
</feature>
<feature type="glycosylation site" description="N-linked (GlcNAc...) asparagine" evidence="2">
    <location>
        <position position="302"/>
    </location>
</feature>
<feature type="glycosylation site" description="N-linked (GlcNAc...) asparagine" evidence="2">
    <location>
        <position position="329"/>
    </location>
</feature>
<feature type="glycosylation site" description="N-linked (GlcNAc...) asparagine" evidence="2">
    <location>
        <position position="354"/>
    </location>
</feature>
<feature type="glycosylation site" description="N-linked (GlcNAc...) asparagine" evidence="2">
    <location>
        <position position="366"/>
    </location>
</feature>
<feature type="glycosylation site" description="N-linked (GlcNAc...) asparagine" evidence="2">
    <location>
        <position position="436"/>
    </location>
</feature>
<feature type="disulfide bond" evidence="1">
    <location>
        <begin position="257"/>
        <end position="274"/>
    </location>
</feature>
<feature type="disulfide bond" evidence="1">
    <location>
        <begin position="392"/>
        <end position="398"/>
    </location>
</feature>
<evidence type="ECO:0000250" key="1"/>
<evidence type="ECO:0000255" key="2"/>
<evidence type="ECO:0000305" key="3"/>
<proteinExistence type="inferred from homology"/>
<comment type="function">
    <text evidence="1">Specific in hydrolyzing the terminal glycosidic bond of polygalacturonic acid and oligogalacturonates.</text>
</comment>
<comment type="catalytic activity">
    <reaction>
        <text>[(1-&gt;4)-alpha-D-galacturonosyl](n) + H2O = alpha-D-galacturonate + [(1-&gt;4)-alpha-D-galacturonosyl](n-1)</text>
        <dbReference type="Rhea" id="RHEA:14117"/>
        <dbReference type="Rhea" id="RHEA-COMP:14570"/>
        <dbReference type="Rhea" id="RHEA-COMP:14572"/>
        <dbReference type="ChEBI" id="CHEBI:15377"/>
        <dbReference type="ChEBI" id="CHEBI:58658"/>
        <dbReference type="ChEBI" id="CHEBI:140523"/>
        <dbReference type="EC" id="3.2.1.67"/>
    </reaction>
</comment>
<comment type="subcellular location">
    <subcellularLocation>
        <location evidence="1">Secreted</location>
    </subcellularLocation>
</comment>
<comment type="similarity">
    <text evidence="3">Belongs to the glycosyl hydrolase 28 family.</text>
</comment>
<keyword id="KW-0961">Cell wall biogenesis/degradation</keyword>
<keyword id="KW-1015">Disulfide bond</keyword>
<keyword id="KW-0325">Glycoprotein</keyword>
<keyword id="KW-0326">Glycosidase</keyword>
<keyword id="KW-0378">Hydrolase</keyword>
<keyword id="KW-1185">Reference proteome</keyword>
<keyword id="KW-0677">Repeat</keyword>
<keyword id="KW-0964">Secreted</keyword>
<keyword id="KW-0732">Signal</keyword>
<sequence>MKFLALAALFASTVSSIAVDGLIPGARVIPANDVVALKKVGAHHQKHPHRRTVIIRPSFNDEDDVSADFLWGIKWANRGGRLLLQKGKKYVIGKKLDLTFLKDIEVQLDGELKFTNDVPYWQANNFYYDFQKSISFWRWGGEDIKIFGSGVLNGNGQRWYNEFAGQEILDPNNKYYRPILFVTENATRVSVEGITQLNSPCWTNFFVRTKDISFNNVFIHAYSTNASALPKNTDGFDTLNVDGLTVTNTRVDIGDDCLSPKPNTTNVFVQNLWCNGTHGTSMGSIGQYPGVLDIIENVWIENVTLLNGENGARLKAWAGPNVGYGRINNVTYKNIHVENTDNPIVLDQCYFNINATQCAAYPSRVNFTNIVFENIYGTSSGKHGKVVADLTCSPNAVCSGIRLKNIHLTSPAGSPPVIVCDGIQGDIGVECQSSTNLTTKRSIGLARNLKYKA</sequence>